<organism>
    <name type="scientific">Homo sapiens</name>
    <name type="common">Human</name>
    <dbReference type="NCBI Taxonomy" id="9606"/>
    <lineage>
        <taxon>Eukaryota</taxon>
        <taxon>Metazoa</taxon>
        <taxon>Chordata</taxon>
        <taxon>Craniata</taxon>
        <taxon>Vertebrata</taxon>
        <taxon>Euteleostomi</taxon>
        <taxon>Mammalia</taxon>
        <taxon>Eutheria</taxon>
        <taxon>Euarchontoglires</taxon>
        <taxon>Primates</taxon>
        <taxon>Haplorrhini</taxon>
        <taxon>Catarrhini</taxon>
        <taxon>Hominidae</taxon>
        <taxon>Homo</taxon>
    </lineage>
</organism>
<comment type="function">
    <text evidence="1">May be involved in the regulation of p53-dependent G2 arrest of the cell cycle. Seems to induce cell cycle arrest by inhibiting CDK1 activity and nuclear translocation of the CDC2 cyclin B1 complex (By similarity).</text>
</comment>
<comment type="interaction">
    <interactant intactId="EBI-1052363">
        <id>Q9NS64</id>
    </interactant>
    <interactant intactId="EBI-17979264">
        <id>Q86Y34</id>
        <label>ADGRG3</label>
    </interactant>
    <organismsDiffer>false</organismsDiffer>
    <experiments>3</experiments>
</comment>
<comment type="interaction">
    <interactant intactId="EBI-1052363">
        <id>Q9NS64</id>
    </interactant>
    <interactant intactId="EBI-19125216">
        <id>Q86WK6</id>
        <label>AMIGO1</label>
    </interactant>
    <organismsDiffer>false</organismsDiffer>
    <experiments>3</experiments>
</comment>
<comment type="interaction">
    <interactant intactId="EBI-1052363">
        <id>Q9NS64</id>
    </interactant>
    <interactant intactId="EBI-13059134">
        <id>Q13520</id>
        <label>AQP6</label>
    </interactant>
    <organismsDiffer>false</organismsDiffer>
    <experiments>3</experiments>
</comment>
<comment type="interaction">
    <interactant intactId="EBI-1052363">
        <id>Q9NS64</id>
    </interactant>
    <interactant intactId="EBI-2808808">
        <id>P53367</id>
        <label>ARFIP1</label>
    </interactant>
    <organismsDiffer>false</organismsDiffer>
    <experiments>3</experiments>
</comment>
<comment type="interaction">
    <interactant intactId="EBI-1052363">
        <id>Q9NS64</id>
    </interactant>
    <interactant intactId="EBI-12808270">
        <id>P07307-3</id>
        <label>ASGR2</label>
    </interactant>
    <organismsDiffer>false</organismsDiffer>
    <experiments>3</experiments>
</comment>
<comment type="interaction">
    <interactant intactId="EBI-1052363">
        <id>Q9NS64</id>
    </interactant>
    <interactant intactId="EBI-749464">
        <id>Q12983</id>
        <label>BNIP3</label>
    </interactant>
    <organismsDiffer>false</organismsDiffer>
    <experiments>3</experiments>
</comment>
<comment type="interaction">
    <interactant intactId="EBI-1052363">
        <id>Q9NS64</id>
    </interactant>
    <interactant intactId="EBI-11532900">
        <id>J3KQ12</id>
        <label>BSCL2</label>
    </interactant>
    <organismsDiffer>false</organismsDiffer>
    <experiments>3</experiments>
</comment>
<comment type="interaction">
    <interactant intactId="EBI-1052363">
        <id>Q9NS64</id>
    </interactant>
    <interactant intactId="EBI-17953245">
        <id>Q6UXG8-3</id>
        <label>BTNL9</label>
    </interactant>
    <organismsDiffer>false</organismsDiffer>
    <experiments>3</experiments>
</comment>
<comment type="interaction">
    <interactant intactId="EBI-1052363">
        <id>Q9NS64</id>
    </interactant>
    <interactant intactId="EBI-18041102">
        <id>Q6UWD8</id>
        <label>C16orf54</label>
    </interactant>
    <organismsDiffer>false</organismsDiffer>
    <experiments>3</experiments>
</comment>
<comment type="interaction">
    <interactant intactId="EBI-1052363">
        <id>Q9NS64</id>
    </interactant>
    <interactant intactId="EBI-3906571">
        <id>P20138</id>
        <label>CD33</label>
    </interactant>
    <organismsDiffer>false</organismsDiffer>
    <experiments>3</experiments>
</comment>
<comment type="interaction">
    <interactant intactId="EBI-1052363">
        <id>Q9NS64</id>
    </interactant>
    <interactant intactId="EBI-6657396">
        <id>P19397</id>
        <label>CD53</label>
    </interactant>
    <organismsDiffer>false</organismsDiffer>
    <experiments>3</experiments>
</comment>
<comment type="interaction">
    <interactant intactId="EBI-1052363">
        <id>Q9NS64</id>
    </interactant>
    <interactant intactId="EBI-2836595">
        <id>Q07108</id>
        <label>CD69</label>
    </interactant>
    <organismsDiffer>false</organismsDiffer>
    <experiments>3</experiments>
</comment>
<comment type="interaction">
    <interactant intactId="EBI-1052363">
        <id>Q9NS64</id>
    </interactant>
    <interactant intactId="EBI-18400628">
        <id>O00501</id>
        <label>CLDN5</label>
    </interactant>
    <organismsDiffer>false</organismsDiffer>
    <experiments>3</experiments>
</comment>
<comment type="interaction">
    <interactant intactId="EBI-1052363">
        <id>Q9NS64</id>
    </interactant>
    <interactant intactId="EBI-740744">
        <id>O95471</id>
        <label>CLDN7</label>
    </interactant>
    <organismsDiffer>false</organismsDiffer>
    <experiments>3</experiments>
</comment>
<comment type="interaction">
    <interactant intactId="EBI-1052363">
        <id>Q9NS64</id>
    </interactant>
    <interactant intactId="EBI-18341636">
        <id>O95484</id>
        <label>CLDN9</label>
    </interactant>
    <organismsDiffer>false</organismsDiffer>
    <experiments>3</experiments>
</comment>
<comment type="interaction">
    <interactant intactId="EBI-1052363">
        <id>Q9NS64</id>
    </interactant>
    <interactant intactId="EBI-11977093">
        <id>Q6ZS10</id>
        <label>CLEC17A</label>
    </interactant>
    <organismsDiffer>false</organismsDiffer>
    <experiments>4</experiments>
</comment>
<comment type="interaction">
    <interactant intactId="EBI-1052363">
        <id>Q9NS64</id>
    </interactant>
    <interactant intactId="EBI-11749983">
        <id>Q9UHP7-3</id>
        <label>CLEC2D</label>
    </interactant>
    <organismsDiffer>false</organismsDiffer>
    <experiments>3</experiments>
</comment>
<comment type="interaction">
    <interactant intactId="EBI-1052363">
        <id>Q9NS64</id>
    </interactant>
    <interactant intactId="EBI-745535">
        <id>Q8NI60</id>
        <label>COQ8A</label>
    </interactant>
    <organismsDiffer>false</organismsDiffer>
    <experiments>3</experiments>
</comment>
<comment type="interaction">
    <interactant intactId="EBI-1052363">
        <id>Q9NS64</id>
    </interactant>
    <interactant intactId="EBI-12823659">
        <id>Q5JRM2</id>
        <label>CXorf66</label>
    </interactant>
    <organismsDiffer>false</organismsDiffer>
    <experiments>3</experiments>
</comment>
<comment type="interaction">
    <interactant intactId="EBI-1052363">
        <id>Q9NS64</id>
    </interactant>
    <interactant intactId="EBI-2339219">
        <id>Q08426</id>
        <label>EHHADH</label>
    </interactant>
    <organismsDiffer>false</organismsDiffer>
    <experiments>3</experiments>
</comment>
<comment type="interaction">
    <interactant intactId="EBI-1052363">
        <id>Q9NS64</id>
    </interactant>
    <interactant intactId="EBI-4319440">
        <id>P54849</id>
        <label>EMP1</label>
    </interactant>
    <organismsDiffer>false</organismsDiffer>
    <experiments>3</experiments>
</comment>
<comment type="interaction">
    <interactant intactId="EBI-1052363">
        <id>Q9NS64</id>
    </interactant>
    <interactant intactId="EBI-18304435">
        <id>Q5JX71</id>
        <label>FAM209A</label>
    </interactant>
    <organismsDiffer>false</organismsDiffer>
    <experiments>3</experiments>
</comment>
<comment type="interaction">
    <interactant intactId="EBI-1052363">
        <id>Q9NS64</id>
    </interactant>
    <interactant intactId="EBI-18938272">
        <id>Q96KR6</id>
        <label>FAM210B</label>
    </interactant>
    <organismsDiffer>false</organismsDiffer>
    <experiments>3</experiments>
</comment>
<comment type="interaction">
    <interactant intactId="EBI-1052363">
        <id>Q9NS64</id>
    </interactant>
    <interactant intactId="EBI-743099">
        <id>Q969F0</id>
        <label>FATE1</label>
    </interactant>
    <organismsDiffer>false</organismsDiffer>
    <experiments>6</experiments>
</comment>
<comment type="interaction">
    <interactant intactId="EBI-1052363">
        <id>Q9NS64</id>
    </interactant>
    <interactant intactId="EBI-11959077">
        <id>Q6PCT2-2</id>
        <label>FBXL19</label>
    </interactant>
    <organismsDiffer>false</organismsDiffer>
    <experiments>3</experiments>
</comment>
<comment type="interaction">
    <interactant intactId="EBI-1052363">
        <id>Q9NS64</id>
    </interactant>
    <interactant intactId="EBI-2869867">
        <id>P12314</id>
        <label>FCGR1A</label>
    </interactant>
    <organismsDiffer>false</organismsDiffer>
    <experiments>3</experiments>
</comment>
<comment type="interaction">
    <interactant intactId="EBI-1052363">
        <id>Q9NS64</id>
    </interactant>
    <interactant intactId="EBI-2833872">
        <id>O15552</id>
        <label>FFAR2</label>
    </interactant>
    <organismsDiffer>false</organismsDiffer>
    <experiments>3</experiments>
</comment>
<comment type="interaction">
    <interactant intactId="EBI-1052363">
        <id>Q9NS64</id>
    </interactant>
    <interactant intactId="EBI-1057190">
        <id>Q7Z6J4</id>
        <label>FGD2</label>
    </interactant>
    <organismsDiffer>false</organismsDiffer>
    <experiments>3</experiments>
</comment>
<comment type="interaction">
    <interactant intactId="EBI-1052363">
        <id>Q9NS64</id>
    </interactant>
    <interactant intactId="EBI-3918971">
        <id>Q9Y680</id>
        <label>FKBP7</label>
    </interactant>
    <organismsDiffer>false</organismsDiffer>
    <experiments>3</experiments>
</comment>
<comment type="interaction">
    <interactant intactId="EBI-1052363">
        <id>Q9NS64</id>
    </interactant>
    <interactant intactId="EBI-12142257">
        <id>Q8TBE3</id>
        <label>FNDC9</label>
    </interactant>
    <organismsDiffer>false</organismsDiffer>
    <experiments>3</experiments>
</comment>
<comment type="interaction">
    <interactant intactId="EBI-1052363">
        <id>Q9NS64</id>
    </interactant>
    <interactant intactId="EBI-9304251">
        <id>Q05329</id>
        <label>GAD2</label>
    </interactant>
    <organismsDiffer>false</organismsDiffer>
    <experiments>3</experiments>
</comment>
<comment type="interaction">
    <interactant intactId="EBI-1052363">
        <id>Q9NS64</id>
    </interactant>
    <interactant intactId="EBI-750433">
        <id>P36382</id>
        <label>GJA5</label>
    </interactant>
    <organismsDiffer>false</organismsDiffer>
    <experiments>3</experiments>
</comment>
<comment type="interaction">
    <interactant intactId="EBI-1052363">
        <id>Q9NS64</id>
    </interactant>
    <interactant intactId="EBI-3908586">
        <id>O75712</id>
        <label>GJB3</label>
    </interactant>
    <organismsDiffer>false</organismsDiffer>
    <experiments>3</experiments>
</comment>
<comment type="interaction">
    <interactant intactId="EBI-1052363">
        <id>Q9NS64</id>
    </interactant>
    <interactant intactId="EBI-3909454">
        <id>O95377</id>
        <label>GJB5</label>
    </interactant>
    <organismsDiffer>false</organismsDiffer>
    <experiments>3</experiments>
</comment>
<comment type="interaction">
    <interactant intactId="EBI-1052363">
        <id>Q9NS64</id>
    </interactant>
    <interactant intactId="EBI-11427343">
        <id>Q9P2W3</id>
        <label>GNG13</label>
    </interactant>
    <organismsDiffer>false</organismsDiffer>
    <experiments>3</experiments>
</comment>
<comment type="interaction">
    <interactant intactId="EBI-1052363">
        <id>Q9NS64</id>
    </interactant>
    <interactant intactId="EBI-2927498">
        <id>O60883</id>
        <label>GPR37L1</label>
    </interactant>
    <organismsDiffer>false</organismsDiffer>
    <experiments>3</experiments>
</comment>
<comment type="interaction">
    <interactant intactId="EBI-1052363">
        <id>Q9NS64</id>
    </interactant>
    <interactant intactId="EBI-18076404">
        <id>O15529</id>
        <label>GPR42</label>
    </interactant>
    <organismsDiffer>false</organismsDiffer>
    <experiments>3</experiments>
</comment>
<comment type="interaction">
    <interactant intactId="EBI-1052363">
        <id>Q9NS64</id>
    </interactant>
    <interactant intactId="EBI-2867874">
        <id>Q9UM44</id>
        <label>HHLA2</label>
    </interactant>
    <organismsDiffer>false</organismsDiffer>
    <experiments>3</experiments>
</comment>
<comment type="interaction">
    <interactant intactId="EBI-1052363">
        <id>Q9NS64</id>
    </interactant>
    <interactant intactId="EBI-473886">
        <id>O00291</id>
        <label>HIP1</label>
    </interactant>
    <organismsDiffer>false</organismsDiffer>
    <experiments>3</experiments>
</comment>
<comment type="interaction">
    <interactant intactId="EBI-1052363">
        <id>Q9NS64</id>
    </interactant>
    <interactant intactId="EBI-18053395">
        <id>Q7Z5P4</id>
        <label>HSD17B13</label>
    </interactant>
    <organismsDiffer>false</organismsDiffer>
    <experiments>3</experiments>
</comment>
<comment type="interaction">
    <interactant intactId="EBI-1052363">
        <id>Q9NS64</id>
    </interactant>
    <interactant intactId="EBI-12017638">
        <id>P48051</id>
        <label>KCNJ6</label>
    </interactant>
    <organismsDiffer>false</organismsDiffer>
    <experiments>3</experiments>
</comment>
<comment type="interaction">
    <interactant intactId="EBI-1052363">
        <id>Q9NS64</id>
    </interactant>
    <interactant intactId="EBI-2865663">
        <id>Q13571</id>
        <label>LAPTM5</label>
    </interactant>
    <organismsDiffer>false</organismsDiffer>
    <experiments>3</experiments>
</comment>
<comment type="interaction">
    <interactant intactId="EBI-1052363">
        <id>Q9NS64</id>
    </interactant>
    <interactant intactId="EBI-2820517">
        <id>Q8TAF8</id>
        <label>LHFPL5</label>
    </interactant>
    <organismsDiffer>false</organismsDiffer>
    <experiments>3</experiments>
</comment>
<comment type="interaction">
    <interactant intactId="EBI-1052363">
        <id>Q9NS64</id>
    </interactant>
    <interactant intactId="EBI-2876949">
        <id>P43657</id>
        <label>LPAR6</label>
    </interactant>
    <organismsDiffer>false</organismsDiffer>
    <experiments>3</experiments>
</comment>
<comment type="interaction">
    <interactant intactId="EBI-1052363">
        <id>Q9NS64</id>
    </interactant>
    <interactant intactId="EBI-711788">
        <id>Q00013</id>
        <label>MPP1</label>
    </interactant>
    <organismsDiffer>false</organismsDiffer>
    <experiments>3</experiments>
</comment>
<comment type="interaction">
    <interactant intactId="EBI-1052363">
        <id>Q9NS64</id>
    </interactant>
    <interactant intactId="EBI-12820341">
        <id>Q96JQ5</id>
        <label>MS4A4A</label>
    </interactant>
    <organismsDiffer>false</organismsDiffer>
    <experiments>4</experiments>
</comment>
<comment type="interaction">
    <interactant intactId="EBI-1052363">
        <id>Q9NS64</id>
    </interactant>
    <interactant intactId="EBI-3923617">
        <id>Q9H2K0</id>
        <label>MTIF3</label>
    </interactant>
    <organismsDiffer>false</organismsDiffer>
    <experiments>3</experiments>
</comment>
<comment type="interaction">
    <interactant intactId="EBI-1052363">
        <id>Q9NS64</id>
    </interactant>
    <interactant intactId="EBI-2624456">
        <id>P41143</id>
        <label>OPRD1</label>
    </interactant>
    <organismsDiffer>false</organismsDiffer>
    <experiments>3</experiments>
</comment>
<comment type="interaction">
    <interactant intactId="EBI-1052363">
        <id>Q9NS64</id>
    </interactant>
    <interactant intactId="EBI-12807478">
        <id>P35372-10</id>
        <label>OPRM1</label>
    </interactant>
    <organismsDiffer>false</organismsDiffer>
    <experiments>3</experiments>
</comment>
<comment type="interaction">
    <interactant intactId="EBI-1052363">
        <id>Q9NS64</id>
    </interactant>
    <interactant intactId="EBI-741171">
        <id>Q96AL5</id>
        <label>PBX3</label>
    </interactant>
    <organismsDiffer>false</organismsDiffer>
    <experiments>3</experiments>
</comment>
<comment type="interaction">
    <interactant intactId="EBI-1052363">
        <id>Q9NS64</id>
    </interactant>
    <interactant intactId="EBI-716063">
        <id>Q13113</id>
        <label>PDZK1IP1</label>
    </interactant>
    <organismsDiffer>false</organismsDiffer>
    <experiments>3</experiments>
</comment>
<comment type="interaction">
    <interactant intactId="EBI-1052363">
        <id>Q9NS64</id>
    </interactant>
    <interactant intactId="EBI-742388">
        <id>Q9H8W4</id>
        <label>PLEKHF2</label>
    </interactant>
    <organismsDiffer>false</organismsDiffer>
    <experiments>3</experiments>
</comment>
<comment type="interaction">
    <interactant intactId="EBI-1052363">
        <id>Q9NS64</id>
    </interactant>
    <interactant intactId="EBI-1045072">
        <id>Q96T60</id>
        <label>PNKP</label>
    </interactant>
    <organismsDiffer>false</organismsDiffer>
    <experiments>3</experiments>
</comment>
<comment type="interaction">
    <interactant intactId="EBI-1052363">
        <id>Q9NS64</id>
    </interactant>
    <interactant intactId="EBI-745846">
        <id>P57086</id>
        <label>SCAND1</label>
    </interactant>
    <organismsDiffer>false</organismsDiffer>
    <experiments>3</experiments>
</comment>
<comment type="interaction">
    <interactant intactId="EBI-1052363">
        <id>Q9NS64</id>
    </interactant>
    <interactant intactId="EBI-727004">
        <id>O00560</id>
        <label>SDCBP</label>
    </interactant>
    <organismsDiffer>false</organismsDiffer>
    <experiments>3</experiments>
</comment>
<comment type="interaction">
    <interactant intactId="EBI-1052363">
        <id>Q9NS64</id>
    </interactant>
    <interactant intactId="EBI-714881">
        <id>Q9HC62</id>
        <label>SENP2</label>
    </interactant>
    <organismsDiffer>false</organismsDiffer>
    <experiments>3</experiments>
</comment>
<comment type="interaction">
    <interactant intactId="EBI-1052363">
        <id>Q9NS64</id>
    </interactant>
    <interactant intactId="EBI-17595455">
        <id>P54219-3</id>
        <label>SLC18A1</label>
    </interactant>
    <organismsDiffer>false</organismsDiffer>
    <experiments>3</experiments>
</comment>
<comment type="interaction">
    <interactant intactId="EBI-1052363">
        <id>Q9NS64</id>
    </interactant>
    <interactant intactId="EBI-9978441">
        <id>Q9H2H9</id>
        <label>SLC38A1</label>
    </interactant>
    <organismsDiffer>false</organismsDiffer>
    <experiments>3</experiments>
</comment>
<comment type="interaction">
    <interactant intactId="EBI-1052363">
        <id>Q9NS64</id>
    </interactant>
    <interactant intactId="EBI-741850">
        <id>Q9BZL3</id>
        <label>SMIM3</label>
    </interactant>
    <organismsDiffer>false</organismsDiffer>
    <experiments>3</experiments>
</comment>
<comment type="interaction">
    <interactant intactId="EBI-1052363">
        <id>Q9NS64</id>
    </interactant>
    <interactant intactId="EBI-10329449">
        <id>Q9Y5W9</id>
        <label>SNX11</label>
    </interactant>
    <organismsDiffer>false</organismsDiffer>
    <experiments>3</experiments>
</comment>
<comment type="interaction">
    <interactant intactId="EBI-1052363">
        <id>Q9NS64</id>
    </interactant>
    <interactant intactId="EBI-22419305">
        <id>Q9UMY4-1</id>
        <label>SNX12</label>
    </interactant>
    <organismsDiffer>false</organismsDiffer>
    <experiments>3</experiments>
</comment>
<comment type="interaction">
    <interactant intactId="EBI-1052363">
        <id>Q9NS64</id>
    </interactant>
    <interactant intactId="EBI-727209">
        <id>O60493</id>
        <label>SNX3</label>
    </interactant>
    <organismsDiffer>false</organismsDiffer>
    <experiments>3</experiments>
</comment>
<comment type="interaction">
    <interactant intactId="EBI-1052363">
        <id>Q9NS64</id>
    </interactant>
    <interactant intactId="EBI-17498703">
        <id>Q9HBV2</id>
        <label>SPACA1</label>
    </interactant>
    <organismsDiffer>false</organismsDiffer>
    <experiments>3</experiments>
</comment>
<comment type="interaction">
    <interactant intactId="EBI-1052363">
        <id>Q9NS64</id>
    </interactant>
    <interactant intactId="EBI-1211440">
        <id>P27105</id>
        <label>STOM</label>
    </interactant>
    <organismsDiffer>false</organismsDiffer>
    <experiments>3</experiments>
</comment>
<comment type="interaction">
    <interactant intactId="EBI-1052363">
        <id>Q9NS64</id>
    </interactant>
    <interactant intactId="EBI-18194029">
        <id>Q96L08</id>
        <label>SUSD3</label>
    </interactant>
    <organismsDiffer>false</organismsDiffer>
    <experiments>3</experiments>
</comment>
<comment type="interaction">
    <interactant intactId="EBI-1052363">
        <id>Q9NS64</id>
    </interactant>
    <interactant intactId="EBI-10238936">
        <id>Q17RD7</id>
        <label>SYT16</label>
    </interactant>
    <organismsDiffer>false</organismsDiffer>
    <experiments>3</experiments>
</comment>
<comment type="interaction">
    <interactant intactId="EBI-1052363">
        <id>Q9NS64</id>
    </interactant>
    <interactant intactId="EBI-13351685">
        <id>Q96CE8</id>
        <label>TM4SF18</label>
    </interactant>
    <organismsDiffer>false</organismsDiffer>
    <experiments>3</experiments>
</comment>
<comment type="interaction">
    <interactant intactId="EBI-1052363">
        <id>Q9NS64</id>
    </interactant>
    <interactant intactId="EBI-2821497">
        <id>Q9BVX2</id>
        <label>TMEM106C</label>
    </interactant>
    <organismsDiffer>false</organismsDiffer>
    <experiments>3</experiments>
</comment>
<comment type="interaction">
    <interactant intactId="EBI-1052363">
        <id>Q9NS64</id>
    </interactant>
    <interactant intactId="EBI-10982110">
        <id>Q96Q45-2</id>
        <label>TMEM237</label>
    </interactant>
    <organismsDiffer>false</organismsDiffer>
    <experiments>3</experiments>
</comment>
<comment type="interaction">
    <interactant intactId="EBI-1052363">
        <id>Q9NS64</id>
    </interactant>
    <interactant intactId="EBI-8649725">
        <id>Q9BSE2</id>
        <label>TMEM79</label>
    </interactant>
    <organismsDiffer>false</organismsDiffer>
    <experiments>6</experiments>
</comment>
<comment type="interaction">
    <interactant intactId="EBI-1052363">
        <id>Q9NS64</id>
    </interactant>
    <interactant intactId="EBI-11742770">
        <id>Q96HE8</id>
        <label>TMEM80</label>
    </interactant>
    <organismsDiffer>false</organismsDiffer>
    <experiments>3</experiments>
</comment>
<comment type="interaction">
    <interactant intactId="EBI-1052363">
        <id>Q9NS64</id>
    </interactant>
    <interactant intactId="EBI-2548832">
        <id>Q8N661</id>
        <label>TMEM86B</label>
    </interactant>
    <organismsDiffer>false</organismsDiffer>
    <experiments>3</experiments>
</comment>
<comment type="interaction">
    <interactant intactId="EBI-1052363">
        <id>Q9NS64</id>
    </interactant>
    <interactant intactId="EBI-12195249">
        <id>Q5TGU0</id>
        <label>TSPO2</label>
    </interactant>
    <organismsDiffer>false</organismsDiffer>
    <experiments>3</experiments>
</comment>
<comment type="interaction">
    <interactant intactId="EBI-1052363">
        <id>Q9NS64</id>
    </interactant>
    <interactant intactId="EBI-10210710">
        <id>P49638</id>
        <label>TTPA</label>
    </interactant>
    <organismsDiffer>false</organismsDiffer>
    <experiments>3</experiments>
</comment>
<comment type="interaction">
    <interactant intactId="EBI-1052363">
        <id>Q9NS64</id>
    </interactant>
    <interactant intactId="EBI-9478589">
        <id>Q96P53</id>
        <label>WDFY2</label>
    </interactant>
    <organismsDiffer>false</organismsDiffer>
    <experiments>3</experiments>
</comment>
<comment type="interaction">
    <interactant intactId="EBI-1052363">
        <id>Q9NS64</id>
    </interactant>
    <interactant intactId="EBI-10268111">
        <id>Q8N966</id>
        <label>ZDHHC22</label>
    </interactant>
    <organismsDiffer>false</organismsDiffer>
    <experiments>3</experiments>
</comment>
<comment type="subcellular location">
    <subcellularLocation>
        <location evidence="1">Cytoplasm</location>
    </subcellularLocation>
    <subcellularLocation>
        <location evidence="5">Membrane</location>
        <topology evidence="5">Single-pass membrane protein</topology>
    </subcellularLocation>
</comment>
<comment type="induction">
    <text evidence="4">By p53/TP53, following X-ray irradiation.</text>
</comment>
<comment type="miscellaneous">
    <text>'Reprimo' signifies stop/repress.</text>
</comment>
<comment type="similarity">
    <text evidence="5">Belongs to the reprimo family.</text>
</comment>
<comment type="online information" name="Atlas of Genetics and Cytogenetics in Oncology and Haematology">
    <link uri="https://atlasgeneticsoncology.org/gene/42082/RPRM"/>
</comment>
<proteinExistence type="evidence at protein level"/>
<keyword id="KW-0963">Cytoplasm</keyword>
<keyword id="KW-0325">Glycoprotein</keyword>
<keyword id="KW-0472">Membrane</keyword>
<keyword id="KW-0597">Phosphoprotein</keyword>
<keyword id="KW-1267">Proteomics identification</keyword>
<keyword id="KW-1185">Reference proteome</keyword>
<keyword id="KW-0812">Transmembrane</keyword>
<keyword id="KW-1133">Transmembrane helix</keyword>
<reference key="1">
    <citation type="journal article" date="2000" name="J. Biol. Chem.">
        <title>Reprimo, a new candidate mediator of the p53-mediated cell cycle arrest at the G2 phase.</title>
        <authorList>
            <person name="Ohki R."/>
            <person name="Nemoto J."/>
            <person name="Murasawa H."/>
            <person name="Oda E."/>
            <person name="Inazawa J."/>
            <person name="Tanaka N."/>
            <person name="Taniguchi T."/>
        </authorList>
    </citation>
    <scope>NUCLEOTIDE SEQUENCE [MRNA]</scope>
    <scope>INDUCTION</scope>
</reference>
<reference key="2">
    <citation type="journal article" date="2004" name="Nat. Genet.">
        <title>Complete sequencing and characterization of 21,243 full-length human cDNAs.</title>
        <authorList>
            <person name="Ota T."/>
            <person name="Suzuki Y."/>
            <person name="Nishikawa T."/>
            <person name="Otsuki T."/>
            <person name="Sugiyama T."/>
            <person name="Irie R."/>
            <person name="Wakamatsu A."/>
            <person name="Hayashi K."/>
            <person name="Sato H."/>
            <person name="Nagai K."/>
            <person name="Kimura K."/>
            <person name="Makita H."/>
            <person name="Sekine M."/>
            <person name="Obayashi M."/>
            <person name="Nishi T."/>
            <person name="Shibahara T."/>
            <person name="Tanaka T."/>
            <person name="Ishii S."/>
            <person name="Yamamoto J."/>
            <person name="Saito K."/>
            <person name="Kawai Y."/>
            <person name="Isono Y."/>
            <person name="Nakamura Y."/>
            <person name="Nagahari K."/>
            <person name="Murakami K."/>
            <person name="Yasuda T."/>
            <person name="Iwayanagi T."/>
            <person name="Wagatsuma M."/>
            <person name="Shiratori A."/>
            <person name="Sudo H."/>
            <person name="Hosoiri T."/>
            <person name="Kaku Y."/>
            <person name="Kodaira H."/>
            <person name="Kondo H."/>
            <person name="Sugawara M."/>
            <person name="Takahashi M."/>
            <person name="Kanda K."/>
            <person name="Yokoi T."/>
            <person name="Furuya T."/>
            <person name="Kikkawa E."/>
            <person name="Omura Y."/>
            <person name="Abe K."/>
            <person name="Kamihara K."/>
            <person name="Katsuta N."/>
            <person name="Sato K."/>
            <person name="Tanikawa M."/>
            <person name="Yamazaki M."/>
            <person name="Ninomiya K."/>
            <person name="Ishibashi T."/>
            <person name="Yamashita H."/>
            <person name="Murakawa K."/>
            <person name="Fujimori K."/>
            <person name="Tanai H."/>
            <person name="Kimata M."/>
            <person name="Watanabe M."/>
            <person name="Hiraoka S."/>
            <person name="Chiba Y."/>
            <person name="Ishida S."/>
            <person name="Ono Y."/>
            <person name="Takiguchi S."/>
            <person name="Watanabe S."/>
            <person name="Yosida M."/>
            <person name="Hotuta T."/>
            <person name="Kusano J."/>
            <person name="Kanehori K."/>
            <person name="Takahashi-Fujii A."/>
            <person name="Hara H."/>
            <person name="Tanase T.-O."/>
            <person name="Nomura Y."/>
            <person name="Togiya S."/>
            <person name="Komai F."/>
            <person name="Hara R."/>
            <person name="Takeuchi K."/>
            <person name="Arita M."/>
            <person name="Imose N."/>
            <person name="Musashino K."/>
            <person name="Yuuki H."/>
            <person name="Oshima A."/>
            <person name="Sasaki N."/>
            <person name="Aotsuka S."/>
            <person name="Yoshikawa Y."/>
            <person name="Matsunawa H."/>
            <person name="Ichihara T."/>
            <person name="Shiohata N."/>
            <person name="Sano S."/>
            <person name="Moriya S."/>
            <person name="Momiyama H."/>
            <person name="Satoh N."/>
            <person name="Takami S."/>
            <person name="Terashima Y."/>
            <person name="Suzuki O."/>
            <person name="Nakagawa S."/>
            <person name="Senoh A."/>
            <person name="Mizoguchi H."/>
            <person name="Goto Y."/>
            <person name="Shimizu F."/>
            <person name="Wakebe H."/>
            <person name="Hishigaki H."/>
            <person name="Watanabe T."/>
            <person name="Sugiyama A."/>
            <person name="Takemoto M."/>
            <person name="Kawakami B."/>
            <person name="Yamazaki M."/>
            <person name="Watanabe K."/>
            <person name="Kumagai A."/>
            <person name="Itakura S."/>
            <person name="Fukuzumi Y."/>
            <person name="Fujimori Y."/>
            <person name="Komiyama M."/>
            <person name="Tashiro H."/>
            <person name="Tanigami A."/>
            <person name="Fujiwara T."/>
            <person name="Ono T."/>
            <person name="Yamada K."/>
            <person name="Fujii Y."/>
            <person name="Ozaki K."/>
            <person name="Hirao M."/>
            <person name="Ohmori Y."/>
            <person name="Kawabata A."/>
            <person name="Hikiji T."/>
            <person name="Kobatake N."/>
            <person name="Inagaki H."/>
            <person name="Ikema Y."/>
            <person name="Okamoto S."/>
            <person name="Okitani R."/>
            <person name="Kawakami T."/>
            <person name="Noguchi S."/>
            <person name="Itoh T."/>
            <person name="Shigeta K."/>
            <person name="Senba T."/>
            <person name="Matsumura K."/>
            <person name="Nakajima Y."/>
            <person name="Mizuno T."/>
            <person name="Morinaga M."/>
            <person name="Sasaki M."/>
            <person name="Togashi T."/>
            <person name="Oyama M."/>
            <person name="Hata H."/>
            <person name="Watanabe M."/>
            <person name="Komatsu T."/>
            <person name="Mizushima-Sugano J."/>
            <person name="Satoh T."/>
            <person name="Shirai Y."/>
            <person name="Takahashi Y."/>
            <person name="Nakagawa K."/>
            <person name="Okumura K."/>
            <person name="Nagase T."/>
            <person name="Nomura N."/>
            <person name="Kikuchi H."/>
            <person name="Masuho Y."/>
            <person name="Yamashita R."/>
            <person name="Nakai K."/>
            <person name="Yada T."/>
            <person name="Nakamura Y."/>
            <person name="Ohara O."/>
            <person name="Isogai T."/>
            <person name="Sugano S."/>
        </authorList>
    </citation>
    <scope>NUCLEOTIDE SEQUENCE [LARGE SCALE MRNA]</scope>
    <source>
        <tissue>Uterus</tissue>
    </source>
</reference>
<reference key="3">
    <citation type="journal article" date="2005" name="DNA Res.">
        <title>Signal sequence and keyword trap in silico for selection of full-length human cDNAs encoding secretion or membrane proteins from oligo-capped cDNA libraries.</title>
        <authorList>
            <person name="Otsuki T."/>
            <person name="Ota T."/>
            <person name="Nishikawa T."/>
            <person name="Hayashi K."/>
            <person name="Suzuki Y."/>
            <person name="Yamamoto J."/>
            <person name="Wakamatsu A."/>
            <person name="Kimura K."/>
            <person name="Sakamoto K."/>
            <person name="Hatano N."/>
            <person name="Kawai Y."/>
            <person name="Ishii S."/>
            <person name="Saito K."/>
            <person name="Kojima S."/>
            <person name="Sugiyama T."/>
            <person name="Ono T."/>
            <person name="Okano K."/>
            <person name="Yoshikawa Y."/>
            <person name="Aotsuka S."/>
            <person name="Sasaki N."/>
            <person name="Hattori A."/>
            <person name="Okumura K."/>
            <person name="Nagai K."/>
            <person name="Sugano S."/>
            <person name="Isogai T."/>
        </authorList>
    </citation>
    <scope>NUCLEOTIDE SEQUENCE [LARGE SCALE MRNA]</scope>
</reference>
<reference key="4">
    <citation type="journal article" date="2005" name="Nature">
        <title>Generation and annotation of the DNA sequences of human chromosomes 2 and 4.</title>
        <authorList>
            <person name="Hillier L.W."/>
            <person name="Graves T.A."/>
            <person name="Fulton R.S."/>
            <person name="Fulton L.A."/>
            <person name="Pepin K.H."/>
            <person name="Minx P."/>
            <person name="Wagner-McPherson C."/>
            <person name="Layman D."/>
            <person name="Wylie K."/>
            <person name="Sekhon M."/>
            <person name="Becker M.C."/>
            <person name="Fewell G.A."/>
            <person name="Delehaunty K.D."/>
            <person name="Miner T.L."/>
            <person name="Nash W.E."/>
            <person name="Kremitzki C."/>
            <person name="Oddy L."/>
            <person name="Du H."/>
            <person name="Sun H."/>
            <person name="Bradshaw-Cordum H."/>
            <person name="Ali J."/>
            <person name="Carter J."/>
            <person name="Cordes M."/>
            <person name="Harris A."/>
            <person name="Isak A."/>
            <person name="van Brunt A."/>
            <person name="Nguyen C."/>
            <person name="Du F."/>
            <person name="Courtney L."/>
            <person name="Kalicki J."/>
            <person name="Ozersky P."/>
            <person name="Abbott S."/>
            <person name="Armstrong J."/>
            <person name="Belter E.A."/>
            <person name="Caruso L."/>
            <person name="Cedroni M."/>
            <person name="Cotton M."/>
            <person name="Davidson T."/>
            <person name="Desai A."/>
            <person name="Elliott G."/>
            <person name="Erb T."/>
            <person name="Fronick C."/>
            <person name="Gaige T."/>
            <person name="Haakenson W."/>
            <person name="Haglund K."/>
            <person name="Holmes A."/>
            <person name="Harkins R."/>
            <person name="Kim K."/>
            <person name="Kruchowski S.S."/>
            <person name="Strong C.M."/>
            <person name="Grewal N."/>
            <person name="Goyea E."/>
            <person name="Hou S."/>
            <person name="Levy A."/>
            <person name="Martinka S."/>
            <person name="Mead K."/>
            <person name="McLellan M.D."/>
            <person name="Meyer R."/>
            <person name="Randall-Maher J."/>
            <person name="Tomlinson C."/>
            <person name="Dauphin-Kohlberg S."/>
            <person name="Kozlowicz-Reilly A."/>
            <person name="Shah N."/>
            <person name="Swearengen-Shahid S."/>
            <person name="Snider J."/>
            <person name="Strong J.T."/>
            <person name="Thompson J."/>
            <person name="Yoakum M."/>
            <person name="Leonard S."/>
            <person name="Pearman C."/>
            <person name="Trani L."/>
            <person name="Radionenko M."/>
            <person name="Waligorski J.E."/>
            <person name="Wang C."/>
            <person name="Rock S.M."/>
            <person name="Tin-Wollam A.-M."/>
            <person name="Maupin R."/>
            <person name="Latreille P."/>
            <person name="Wendl M.C."/>
            <person name="Yang S.-P."/>
            <person name="Pohl C."/>
            <person name="Wallis J.W."/>
            <person name="Spieth J."/>
            <person name="Bieri T.A."/>
            <person name="Berkowicz N."/>
            <person name="Nelson J.O."/>
            <person name="Osborne J."/>
            <person name="Ding L."/>
            <person name="Meyer R."/>
            <person name="Sabo A."/>
            <person name="Shotland Y."/>
            <person name="Sinha P."/>
            <person name="Wohldmann P.E."/>
            <person name="Cook L.L."/>
            <person name="Hickenbotham M.T."/>
            <person name="Eldred J."/>
            <person name="Williams D."/>
            <person name="Jones T.A."/>
            <person name="She X."/>
            <person name="Ciccarelli F.D."/>
            <person name="Izaurralde E."/>
            <person name="Taylor J."/>
            <person name="Schmutz J."/>
            <person name="Myers R.M."/>
            <person name="Cox D.R."/>
            <person name="Huang X."/>
            <person name="McPherson J.D."/>
            <person name="Mardis E.R."/>
            <person name="Clifton S.W."/>
            <person name="Warren W.C."/>
            <person name="Chinwalla A.T."/>
            <person name="Eddy S.R."/>
            <person name="Marra M.A."/>
            <person name="Ovcharenko I."/>
            <person name="Furey T.S."/>
            <person name="Miller W."/>
            <person name="Eichler E.E."/>
            <person name="Bork P."/>
            <person name="Suyama M."/>
            <person name="Torrents D."/>
            <person name="Waterston R.H."/>
            <person name="Wilson R.K."/>
        </authorList>
    </citation>
    <scope>NUCLEOTIDE SEQUENCE [LARGE SCALE GENOMIC DNA]</scope>
</reference>
<reference key="5">
    <citation type="submission" date="2005-09" db="EMBL/GenBank/DDBJ databases">
        <authorList>
            <person name="Mural R.J."/>
            <person name="Istrail S."/>
            <person name="Sutton G.G."/>
            <person name="Florea L."/>
            <person name="Halpern A.L."/>
            <person name="Mobarry C.M."/>
            <person name="Lippert R."/>
            <person name="Walenz B."/>
            <person name="Shatkay H."/>
            <person name="Dew I."/>
            <person name="Miller J.R."/>
            <person name="Flanigan M.J."/>
            <person name="Edwards N.J."/>
            <person name="Bolanos R."/>
            <person name="Fasulo D."/>
            <person name="Halldorsson B.V."/>
            <person name="Hannenhalli S."/>
            <person name="Turner R."/>
            <person name="Yooseph S."/>
            <person name="Lu F."/>
            <person name="Nusskern D.R."/>
            <person name="Shue B.C."/>
            <person name="Zheng X.H."/>
            <person name="Zhong F."/>
            <person name="Delcher A.L."/>
            <person name="Huson D.H."/>
            <person name="Kravitz S.A."/>
            <person name="Mouchard L."/>
            <person name="Reinert K."/>
            <person name="Remington K.A."/>
            <person name="Clark A.G."/>
            <person name="Waterman M.S."/>
            <person name="Eichler E.E."/>
            <person name="Adams M.D."/>
            <person name="Hunkapiller M.W."/>
            <person name="Myers E.W."/>
            <person name="Venter J.C."/>
        </authorList>
    </citation>
    <scope>NUCLEOTIDE SEQUENCE [LARGE SCALE GENOMIC DNA]</scope>
</reference>
<reference key="6">
    <citation type="journal article" date="2004" name="Genome Res.">
        <title>The status, quality, and expansion of the NIH full-length cDNA project: the Mammalian Gene Collection (MGC).</title>
        <authorList>
            <consortium name="The MGC Project Team"/>
        </authorList>
    </citation>
    <scope>NUCLEOTIDE SEQUENCE [LARGE SCALE MRNA]</scope>
    <source>
        <tissue>Lung</tissue>
    </source>
</reference>
<feature type="chain" id="PRO_0000312752" description="Protein reprimo">
    <location>
        <begin position="1"/>
        <end position="109"/>
    </location>
</feature>
<feature type="transmembrane region" description="Helical" evidence="3">
    <location>
        <begin position="56"/>
        <end position="76"/>
    </location>
</feature>
<feature type="modified residue" description="Phosphoserine" evidence="2">
    <location>
        <position position="98"/>
    </location>
</feature>
<feature type="glycosylation site" description="N-linked (GlcNAc...) asparagine" evidence="3">
    <location>
        <position position="7"/>
    </location>
</feature>
<feature type="glycosylation site" description="N-linked (GlcNAc...) asparagine" evidence="3">
    <location>
        <position position="18"/>
    </location>
</feature>
<sequence>MNPALGNQTDVAGLFLANSSEALERAVRCCTQASVVTDDGFAEGGPDERSLYIMRVVQIAVMCVLSLTVVFGIFFLGCNLLIKSEGMINFLVKDRRPSKEVEAVVVGPY</sequence>
<name>RPRM_HUMAN</name>
<accession>Q9NS64</accession>
<accession>B2R4V1</accession>
<gene>
    <name type="primary">RPRM</name>
</gene>
<protein>
    <recommendedName>
        <fullName>Protein reprimo</fullName>
    </recommendedName>
</protein>
<dbReference type="EMBL" id="AB043585">
    <property type="protein sequence ID" value="BAB01513.1"/>
    <property type="molecule type" value="mRNA"/>
</dbReference>
<dbReference type="EMBL" id="AK311958">
    <property type="protein sequence ID" value="BAG34898.1"/>
    <property type="molecule type" value="mRNA"/>
</dbReference>
<dbReference type="EMBL" id="AK074808">
    <property type="protein sequence ID" value="BAG52007.1"/>
    <property type="molecule type" value="mRNA"/>
</dbReference>
<dbReference type="EMBL" id="AC012501">
    <property type="protein sequence ID" value="AAY14783.1"/>
    <property type="molecule type" value="Genomic_DNA"/>
</dbReference>
<dbReference type="EMBL" id="CH471058">
    <property type="protein sequence ID" value="EAX11467.1"/>
    <property type="molecule type" value="Genomic_DNA"/>
</dbReference>
<dbReference type="EMBL" id="BC002908">
    <property type="protein sequence ID" value="AAH02908.1"/>
    <property type="molecule type" value="mRNA"/>
</dbReference>
<dbReference type="CCDS" id="CCDS2198.1"/>
<dbReference type="RefSeq" id="NP_062819.1">
    <property type="nucleotide sequence ID" value="NM_019845.3"/>
</dbReference>
<dbReference type="BioGRID" id="121145">
    <property type="interactions" value="104"/>
</dbReference>
<dbReference type="FunCoup" id="Q9NS64">
    <property type="interactions" value="581"/>
</dbReference>
<dbReference type="IntAct" id="Q9NS64">
    <property type="interactions" value="89"/>
</dbReference>
<dbReference type="MINT" id="Q9NS64"/>
<dbReference type="STRING" id="9606.ENSP00000314946"/>
<dbReference type="GlyCosmos" id="Q9NS64">
    <property type="glycosylation" value="2 sites, No reported glycans"/>
</dbReference>
<dbReference type="GlyGen" id="Q9NS64">
    <property type="glycosylation" value="3 sites, 1 O-linked glycan (1 site)"/>
</dbReference>
<dbReference type="iPTMnet" id="Q9NS64"/>
<dbReference type="PhosphoSitePlus" id="Q9NS64"/>
<dbReference type="BioMuta" id="RPRM"/>
<dbReference type="MassIVE" id="Q9NS64"/>
<dbReference type="PaxDb" id="9606-ENSP00000314946"/>
<dbReference type="PeptideAtlas" id="Q9NS64"/>
<dbReference type="ProteomicsDB" id="82495"/>
<dbReference type="Antibodypedia" id="54148">
    <property type="antibodies" value="75 antibodies from 15 providers"/>
</dbReference>
<dbReference type="DNASU" id="56475"/>
<dbReference type="Ensembl" id="ENST00000325926.4">
    <property type="protein sequence ID" value="ENSP00000314946.3"/>
    <property type="gene ID" value="ENSG00000177519.4"/>
</dbReference>
<dbReference type="GeneID" id="56475"/>
<dbReference type="KEGG" id="hsa:56475"/>
<dbReference type="MANE-Select" id="ENST00000325926.4">
    <property type="protein sequence ID" value="ENSP00000314946.3"/>
    <property type="RefSeq nucleotide sequence ID" value="NM_019845.3"/>
    <property type="RefSeq protein sequence ID" value="NP_062819.1"/>
</dbReference>
<dbReference type="UCSC" id="uc002tyq.1">
    <property type="organism name" value="human"/>
</dbReference>
<dbReference type="AGR" id="HGNC:24201"/>
<dbReference type="CTD" id="56475"/>
<dbReference type="DisGeNET" id="56475"/>
<dbReference type="GeneCards" id="RPRM"/>
<dbReference type="HGNC" id="HGNC:24201">
    <property type="gene designation" value="RPRM"/>
</dbReference>
<dbReference type="HPA" id="ENSG00000177519">
    <property type="expression patterns" value="Low tissue specificity"/>
</dbReference>
<dbReference type="MIM" id="612171">
    <property type="type" value="gene"/>
</dbReference>
<dbReference type="neXtProt" id="NX_Q9NS64"/>
<dbReference type="OpenTargets" id="ENSG00000177519"/>
<dbReference type="PharmGKB" id="PA134937494"/>
<dbReference type="VEuPathDB" id="HostDB:ENSG00000177519"/>
<dbReference type="eggNOG" id="ENOG502S262">
    <property type="taxonomic scope" value="Eukaryota"/>
</dbReference>
<dbReference type="GeneTree" id="ENSGT00390000010523"/>
<dbReference type="HOGENOM" id="CLU_170456_0_0_1"/>
<dbReference type="InParanoid" id="Q9NS64"/>
<dbReference type="OMA" id="LKCCNFS"/>
<dbReference type="OrthoDB" id="8570856at2759"/>
<dbReference type="PAN-GO" id="Q9NS64">
    <property type="GO annotations" value="2 GO annotations based on evolutionary models"/>
</dbReference>
<dbReference type="PhylomeDB" id="Q9NS64"/>
<dbReference type="TreeFam" id="TF332720"/>
<dbReference type="PathwayCommons" id="Q9NS64"/>
<dbReference type="SignaLink" id="Q9NS64"/>
<dbReference type="BioGRID-ORCS" id="56475">
    <property type="hits" value="8 hits in 1147 CRISPR screens"/>
</dbReference>
<dbReference type="GenomeRNAi" id="56475"/>
<dbReference type="Pharos" id="Q9NS64">
    <property type="development level" value="Tbio"/>
</dbReference>
<dbReference type="PRO" id="PR:Q9NS64"/>
<dbReference type="Proteomes" id="UP000005640">
    <property type="component" value="Chromosome 2"/>
</dbReference>
<dbReference type="RNAct" id="Q9NS64">
    <property type="molecule type" value="protein"/>
</dbReference>
<dbReference type="Bgee" id="ENSG00000177519">
    <property type="expression patterns" value="Expressed in cortical plate and 123 other cell types or tissues"/>
</dbReference>
<dbReference type="GO" id="GO:0005737">
    <property type="term" value="C:cytoplasm"/>
    <property type="evidence" value="ECO:0000318"/>
    <property type="project" value="GO_Central"/>
</dbReference>
<dbReference type="GO" id="GO:0016020">
    <property type="term" value="C:membrane"/>
    <property type="evidence" value="ECO:0007669"/>
    <property type="project" value="UniProtKB-SubCell"/>
</dbReference>
<dbReference type="GO" id="GO:0051726">
    <property type="term" value="P:regulation of cell cycle"/>
    <property type="evidence" value="ECO:0000304"/>
    <property type="project" value="ProtInc"/>
</dbReference>
<dbReference type="GO" id="GO:0007346">
    <property type="term" value="P:regulation of mitotic cell cycle"/>
    <property type="evidence" value="ECO:0000318"/>
    <property type="project" value="GO_Central"/>
</dbReference>
<dbReference type="InterPro" id="IPR043383">
    <property type="entry name" value="Reprimo_fam"/>
</dbReference>
<dbReference type="PANTHER" id="PTHR28649:SF2">
    <property type="entry name" value="PROTEIN REPRIMO"/>
    <property type="match status" value="1"/>
</dbReference>
<dbReference type="PANTHER" id="PTHR28649">
    <property type="entry name" value="PROTEIN REPRIMO-RELATED"/>
    <property type="match status" value="1"/>
</dbReference>
<evidence type="ECO:0000250" key="1"/>
<evidence type="ECO:0000250" key="2">
    <source>
        <dbReference type="UniProtKB" id="Q9JJ72"/>
    </source>
</evidence>
<evidence type="ECO:0000255" key="3"/>
<evidence type="ECO:0000269" key="4">
    <source>
    </source>
</evidence>
<evidence type="ECO:0000305" key="5"/>